<organism>
    <name type="scientific">Pectobacterium carotovorum subsp. carotovorum (strain PC1)</name>
    <dbReference type="NCBI Taxonomy" id="561230"/>
    <lineage>
        <taxon>Bacteria</taxon>
        <taxon>Pseudomonadati</taxon>
        <taxon>Pseudomonadota</taxon>
        <taxon>Gammaproteobacteria</taxon>
        <taxon>Enterobacterales</taxon>
        <taxon>Pectobacteriaceae</taxon>
        <taxon>Pectobacterium</taxon>
    </lineage>
</organism>
<evidence type="ECO:0000255" key="1">
    <source>
        <dbReference type="HAMAP-Rule" id="MF_00513"/>
    </source>
</evidence>
<evidence type="ECO:0000305" key="2"/>
<dbReference type="EMBL" id="CP001657">
    <property type="protein sequence ID" value="ACT14699.1"/>
    <property type="molecule type" value="Genomic_DNA"/>
</dbReference>
<dbReference type="RefSeq" id="WP_015841813.1">
    <property type="nucleotide sequence ID" value="NC_012917.1"/>
</dbReference>
<dbReference type="SMR" id="C6DF35"/>
<dbReference type="STRING" id="561230.PC1_3684"/>
<dbReference type="KEGG" id="pct:PC1_3684"/>
<dbReference type="eggNOG" id="COG0583">
    <property type="taxonomic scope" value="Bacteria"/>
</dbReference>
<dbReference type="HOGENOM" id="CLU_063829_0_0_6"/>
<dbReference type="OrthoDB" id="3252676at2"/>
<dbReference type="Proteomes" id="UP000002736">
    <property type="component" value="Chromosome"/>
</dbReference>
<dbReference type="GO" id="GO:0003677">
    <property type="term" value="F:DNA binding"/>
    <property type="evidence" value="ECO:0007669"/>
    <property type="project" value="UniProtKB-UniRule"/>
</dbReference>
<dbReference type="GO" id="GO:0003700">
    <property type="term" value="F:DNA-binding transcription factor activity"/>
    <property type="evidence" value="ECO:0007669"/>
    <property type="project" value="UniProtKB-UniRule"/>
</dbReference>
<dbReference type="CDD" id="cd08428">
    <property type="entry name" value="PBP2_IciA_ArgP"/>
    <property type="match status" value="1"/>
</dbReference>
<dbReference type="FunFam" id="1.10.10.10:FF:000061">
    <property type="entry name" value="HTH-type transcriptional regulator ArgP"/>
    <property type="match status" value="1"/>
</dbReference>
<dbReference type="Gene3D" id="3.40.190.290">
    <property type="match status" value="1"/>
</dbReference>
<dbReference type="Gene3D" id="1.10.10.10">
    <property type="entry name" value="Winged helix-like DNA-binding domain superfamily/Winged helix DNA-binding domain"/>
    <property type="match status" value="1"/>
</dbReference>
<dbReference type="HAMAP" id="MF_00513">
    <property type="entry name" value="HTH_type_ArgP"/>
    <property type="match status" value="1"/>
</dbReference>
<dbReference type="InterPro" id="IPR017685">
    <property type="entry name" value="ArgP"/>
</dbReference>
<dbReference type="InterPro" id="IPR023490">
    <property type="entry name" value="ArgP_gammaproteobact"/>
</dbReference>
<dbReference type="InterPro" id="IPR050176">
    <property type="entry name" value="LTTR"/>
</dbReference>
<dbReference type="InterPro" id="IPR005119">
    <property type="entry name" value="LysR_subst-bd"/>
</dbReference>
<dbReference type="InterPro" id="IPR000847">
    <property type="entry name" value="Tscrpt_reg_HTH_LysR"/>
</dbReference>
<dbReference type="InterPro" id="IPR036388">
    <property type="entry name" value="WH-like_DNA-bd_sf"/>
</dbReference>
<dbReference type="InterPro" id="IPR036390">
    <property type="entry name" value="WH_DNA-bd_sf"/>
</dbReference>
<dbReference type="NCBIfam" id="TIGR03298">
    <property type="entry name" value="argP"/>
    <property type="match status" value="1"/>
</dbReference>
<dbReference type="NCBIfam" id="NF002964">
    <property type="entry name" value="PRK03635.1"/>
    <property type="match status" value="1"/>
</dbReference>
<dbReference type="NCBIfam" id="NF009888">
    <property type="entry name" value="PRK13348.1"/>
    <property type="match status" value="1"/>
</dbReference>
<dbReference type="PANTHER" id="PTHR30579:SF2">
    <property type="entry name" value="HTH-TYPE TRANSCRIPTIONAL REGULATOR ARGP"/>
    <property type="match status" value="1"/>
</dbReference>
<dbReference type="PANTHER" id="PTHR30579">
    <property type="entry name" value="TRANSCRIPTIONAL REGULATOR"/>
    <property type="match status" value="1"/>
</dbReference>
<dbReference type="Pfam" id="PF00126">
    <property type="entry name" value="HTH_1"/>
    <property type="match status" value="1"/>
</dbReference>
<dbReference type="Pfam" id="PF03466">
    <property type="entry name" value="LysR_substrate"/>
    <property type="match status" value="1"/>
</dbReference>
<dbReference type="PRINTS" id="PR00039">
    <property type="entry name" value="HTHLYSR"/>
</dbReference>
<dbReference type="SUPFAM" id="SSF53850">
    <property type="entry name" value="Periplasmic binding protein-like II"/>
    <property type="match status" value="1"/>
</dbReference>
<dbReference type="SUPFAM" id="SSF46785">
    <property type="entry name" value="Winged helix' DNA-binding domain"/>
    <property type="match status" value="1"/>
</dbReference>
<dbReference type="PROSITE" id="PS50931">
    <property type="entry name" value="HTH_LYSR"/>
    <property type="match status" value="1"/>
</dbReference>
<protein>
    <recommendedName>
        <fullName evidence="1">HTH-type transcriptional regulator ArgP</fullName>
    </recommendedName>
</protein>
<sequence>MKRPDYRTLQALDAVIRERGFERAAQKLCITQSAVSQRIKQLENLFGQPLLVRTIPPRPTEQGQKLLALLHQVELLEEEWLGNETNSDIPLLLSLAVNADSLATWLLPALQPVLVDSPIRLNLQVEDETRTQERLRRGEVVGAVSIQSQPLPSCLVDKLGALDYLFVASPTFAARYFPNGVTRSALLRAPAVAFDHLDDMHQAFLQQNFDLSPGSVPCHIVNSSEAFVQLARQGTTCCMIPHLQIEKELANNELVDLTPGLFQRRMLYWHRFAPESRMMRKVTDALLAHGHQVLRQS</sequence>
<keyword id="KW-0238">DNA-binding</keyword>
<keyword id="KW-0804">Transcription</keyword>
<keyword id="KW-0805">Transcription regulation</keyword>
<accession>C6DF35</accession>
<gene>
    <name evidence="1" type="primary">argP</name>
    <name type="synonym">iciA</name>
    <name type="ordered locus">PC1_3684</name>
</gene>
<comment type="function">
    <text evidence="1">Controls the transcription of genes involved in arginine and lysine metabolism.</text>
</comment>
<comment type="subunit">
    <text evidence="1">Homodimer.</text>
</comment>
<comment type="similarity">
    <text evidence="2">Belongs to the LysR transcriptional regulatory family.</text>
</comment>
<feature type="chain" id="PRO_1000206629" description="HTH-type transcriptional regulator ArgP">
    <location>
        <begin position="1"/>
        <end position="297"/>
    </location>
</feature>
<feature type="domain" description="HTH lysR-type" evidence="1">
    <location>
        <begin position="4"/>
        <end position="60"/>
    </location>
</feature>
<feature type="DNA-binding region" description="H-T-H motif" evidence="1">
    <location>
        <begin position="21"/>
        <end position="40"/>
    </location>
</feature>
<name>ARGP_PECCP</name>
<proteinExistence type="inferred from homology"/>
<reference key="1">
    <citation type="submission" date="2009-07" db="EMBL/GenBank/DDBJ databases">
        <title>Complete sequence of Pectobacterium carotovorum subsp. carotovorum PC1.</title>
        <authorList>
            <consortium name="US DOE Joint Genome Institute"/>
            <person name="Lucas S."/>
            <person name="Copeland A."/>
            <person name="Lapidus A."/>
            <person name="Glavina del Rio T."/>
            <person name="Tice H."/>
            <person name="Bruce D."/>
            <person name="Goodwin L."/>
            <person name="Pitluck S."/>
            <person name="Munk A.C."/>
            <person name="Brettin T."/>
            <person name="Detter J.C."/>
            <person name="Han C."/>
            <person name="Tapia R."/>
            <person name="Larimer F."/>
            <person name="Land M."/>
            <person name="Hauser L."/>
            <person name="Kyrpides N."/>
            <person name="Mikhailova N."/>
            <person name="Balakrishnan V."/>
            <person name="Glasner J."/>
            <person name="Perna N.T."/>
        </authorList>
    </citation>
    <scope>NUCLEOTIDE SEQUENCE [LARGE SCALE GENOMIC DNA]</scope>
    <source>
        <strain>PC1</strain>
    </source>
</reference>